<keyword id="KW-0378">Hydrolase</keyword>
<reference key="1">
    <citation type="submission" date="2006-12" db="EMBL/GenBank/DDBJ databases">
        <title>Complete sequence of chromosome of Mycobacterium sp. KMS.</title>
        <authorList>
            <consortium name="US DOE Joint Genome Institute"/>
            <person name="Copeland A."/>
            <person name="Lucas S."/>
            <person name="Lapidus A."/>
            <person name="Barry K."/>
            <person name="Detter J.C."/>
            <person name="Glavina del Rio T."/>
            <person name="Hammon N."/>
            <person name="Israni S."/>
            <person name="Dalin E."/>
            <person name="Tice H."/>
            <person name="Pitluck S."/>
            <person name="Kiss H."/>
            <person name="Brettin T."/>
            <person name="Bruce D."/>
            <person name="Han C."/>
            <person name="Tapia R."/>
            <person name="Gilna P."/>
            <person name="Schmutz J."/>
            <person name="Larimer F."/>
            <person name="Land M."/>
            <person name="Hauser L."/>
            <person name="Kyrpides N."/>
            <person name="Mikhailova N."/>
            <person name="Miller C.D."/>
            <person name="Richardson P."/>
        </authorList>
    </citation>
    <scope>NUCLEOTIDE SEQUENCE [LARGE SCALE GENOMIC DNA]</scope>
    <source>
        <strain>KMS</strain>
    </source>
</reference>
<feature type="chain" id="PRO_0000326752" description="Acylphosphatase">
    <location>
        <begin position="1"/>
        <end position="94"/>
    </location>
</feature>
<feature type="domain" description="Acylphosphatase-like" evidence="1">
    <location>
        <begin position="8"/>
        <end position="94"/>
    </location>
</feature>
<feature type="active site" evidence="1">
    <location>
        <position position="23"/>
    </location>
</feature>
<feature type="active site" evidence="1">
    <location>
        <position position="41"/>
    </location>
</feature>
<accession>A1UED9</accession>
<protein>
    <recommendedName>
        <fullName>Acylphosphatase</fullName>
        <ecNumber>3.6.1.7</ecNumber>
    </recommendedName>
    <alternativeName>
        <fullName>Acylphosphate phosphohydrolase</fullName>
    </alternativeName>
</protein>
<proteinExistence type="inferred from homology"/>
<sequence>MSAEPEVRLTAWVHGRVQGVGFRWWTRSRALELGLTGFAANKPDGRVQVVAQGSREDCERLLGLLEGGDTPGRVDKVIADWSDAREQITGFHER</sequence>
<name>ACYP_MYCSK</name>
<gene>
    <name type="primary">acyP</name>
    <name type="ordered locus">Mkms_1998</name>
</gene>
<comment type="catalytic activity">
    <reaction>
        <text>an acyl phosphate + H2O = a carboxylate + phosphate + H(+)</text>
        <dbReference type="Rhea" id="RHEA:14965"/>
        <dbReference type="ChEBI" id="CHEBI:15377"/>
        <dbReference type="ChEBI" id="CHEBI:15378"/>
        <dbReference type="ChEBI" id="CHEBI:29067"/>
        <dbReference type="ChEBI" id="CHEBI:43474"/>
        <dbReference type="ChEBI" id="CHEBI:59918"/>
        <dbReference type="EC" id="3.6.1.7"/>
    </reaction>
</comment>
<comment type="similarity">
    <text evidence="2">Belongs to the acylphosphatase family.</text>
</comment>
<evidence type="ECO:0000255" key="1">
    <source>
        <dbReference type="PROSITE-ProRule" id="PRU00520"/>
    </source>
</evidence>
<evidence type="ECO:0000305" key="2"/>
<dbReference type="EC" id="3.6.1.7"/>
<dbReference type="EMBL" id="CP000518">
    <property type="protein sequence ID" value="ABL91197.1"/>
    <property type="molecule type" value="Genomic_DNA"/>
</dbReference>
<dbReference type="SMR" id="A1UED9"/>
<dbReference type="STRING" id="189918.Mkms_1998"/>
<dbReference type="KEGG" id="mkm:Mkms_1998"/>
<dbReference type="HOGENOM" id="CLU_141932_3_0_11"/>
<dbReference type="OrthoDB" id="3182027at2"/>
<dbReference type="GO" id="GO:0003998">
    <property type="term" value="F:acylphosphatase activity"/>
    <property type="evidence" value="ECO:0007669"/>
    <property type="project" value="UniProtKB-EC"/>
</dbReference>
<dbReference type="Gene3D" id="3.30.70.100">
    <property type="match status" value="1"/>
</dbReference>
<dbReference type="InterPro" id="IPR020456">
    <property type="entry name" value="Acylphosphatase"/>
</dbReference>
<dbReference type="InterPro" id="IPR001792">
    <property type="entry name" value="Acylphosphatase-like_dom"/>
</dbReference>
<dbReference type="InterPro" id="IPR036046">
    <property type="entry name" value="Acylphosphatase-like_dom_sf"/>
</dbReference>
<dbReference type="InterPro" id="IPR017968">
    <property type="entry name" value="Acylphosphatase_CS"/>
</dbReference>
<dbReference type="NCBIfam" id="NF010997">
    <property type="entry name" value="PRK14422.1"/>
    <property type="match status" value="1"/>
</dbReference>
<dbReference type="PANTHER" id="PTHR47268">
    <property type="entry name" value="ACYLPHOSPHATASE"/>
    <property type="match status" value="1"/>
</dbReference>
<dbReference type="PANTHER" id="PTHR47268:SF4">
    <property type="entry name" value="ACYLPHOSPHATASE"/>
    <property type="match status" value="1"/>
</dbReference>
<dbReference type="Pfam" id="PF00708">
    <property type="entry name" value="Acylphosphatase"/>
    <property type="match status" value="1"/>
</dbReference>
<dbReference type="SUPFAM" id="SSF54975">
    <property type="entry name" value="Acylphosphatase/BLUF domain-like"/>
    <property type="match status" value="1"/>
</dbReference>
<dbReference type="PROSITE" id="PS00150">
    <property type="entry name" value="ACYLPHOSPHATASE_1"/>
    <property type="match status" value="1"/>
</dbReference>
<dbReference type="PROSITE" id="PS00151">
    <property type="entry name" value="ACYLPHOSPHATASE_2"/>
    <property type="match status" value="1"/>
</dbReference>
<dbReference type="PROSITE" id="PS51160">
    <property type="entry name" value="ACYLPHOSPHATASE_3"/>
    <property type="match status" value="1"/>
</dbReference>
<organism>
    <name type="scientific">Mycobacterium sp. (strain KMS)</name>
    <dbReference type="NCBI Taxonomy" id="189918"/>
    <lineage>
        <taxon>Bacteria</taxon>
        <taxon>Bacillati</taxon>
        <taxon>Actinomycetota</taxon>
        <taxon>Actinomycetes</taxon>
        <taxon>Mycobacteriales</taxon>
        <taxon>Mycobacteriaceae</taxon>
        <taxon>Mycobacterium</taxon>
    </lineage>
</organism>